<reference key="1">
    <citation type="submission" date="2007-04" db="EMBL/GenBank/DDBJ databases">
        <title>Genome sequence of the thermophilic hydrogen-producing bacterium Caldicellulosiruptor saccharolyticus DSM 8903.</title>
        <authorList>
            <person name="Copeland A."/>
            <person name="Lucas S."/>
            <person name="Lapidus A."/>
            <person name="Barry K."/>
            <person name="Detter J.C."/>
            <person name="Glavina del Rio T."/>
            <person name="Hammon N."/>
            <person name="Israni S."/>
            <person name="Dalin E."/>
            <person name="Tice H."/>
            <person name="Pitluck S."/>
            <person name="Kiss H."/>
            <person name="Brettin T."/>
            <person name="Bruce D."/>
            <person name="Han C."/>
            <person name="Schmutz J."/>
            <person name="Larimer F."/>
            <person name="Land M."/>
            <person name="Hauser L."/>
            <person name="Kyrpides N."/>
            <person name="Lykidis A."/>
            <person name="van de Werken H.J.G."/>
            <person name="Verhaart M.R.A."/>
            <person name="VanFossen A.L."/>
            <person name="Lewis D.L."/>
            <person name="Nichols J.D."/>
            <person name="Goorissen H.P."/>
            <person name="van Niel E.W.J."/>
            <person name="Stams F.J.M."/>
            <person name="Willquist K.U."/>
            <person name="Ward D.E."/>
            <person name="van der Oost J."/>
            <person name="Kelly R.M."/>
            <person name="Kengen S.M.W."/>
            <person name="Richardson P."/>
        </authorList>
    </citation>
    <scope>NUCLEOTIDE SEQUENCE [LARGE SCALE GENOMIC DNA]</scope>
    <source>
        <strain>ATCC 43494 / DSM 8903 / Tp8T 6331</strain>
    </source>
</reference>
<dbReference type="EMBL" id="CP000679">
    <property type="protein sequence ID" value="ABP66823.1"/>
    <property type="molecule type" value="Genomic_DNA"/>
</dbReference>
<dbReference type="RefSeq" id="WP_011916759.1">
    <property type="nucleotide sequence ID" value="NC_009437.1"/>
</dbReference>
<dbReference type="SMR" id="A4XIT8"/>
<dbReference type="STRING" id="351627.Csac_1220"/>
<dbReference type="KEGG" id="csc:Csac_1220"/>
<dbReference type="eggNOG" id="COG2344">
    <property type="taxonomic scope" value="Bacteria"/>
</dbReference>
<dbReference type="HOGENOM" id="CLU_061534_1_0_9"/>
<dbReference type="OrthoDB" id="9784760at2"/>
<dbReference type="Proteomes" id="UP000000256">
    <property type="component" value="Chromosome"/>
</dbReference>
<dbReference type="GO" id="GO:0005737">
    <property type="term" value="C:cytoplasm"/>
    <property type="evidence" value="ECO:0007669"/>
    <property type="project" value="UniProtKB-SubCell"/>
</dbReference>
<dbReference type="GO" id="GO:0003677">
    <property type="term" value="F:DNA binding"/>
    <property type="evidence" value="ECO:0007669"/>
    <property type="project" value="UniProtKB-UniRule"/>
</dbReference>
<dbReference type="GO" id="GO:0003700">
    <property type="term" value="F:DNA-binding transcription factor activity"/>
    <property type="evidence" value="ECO:0007669"/>
    <property type="project" value="UniProtKB-UniRule"/>
</dbReference>
<dbReference type="GO" id="GO:0045892">
    <property type="term" value="P:negative regulation of DNA-templated transcription"/>
    <property type="evidence" value="ECO:0007669"/>
    <property type="project" value="InterPro"/>
</dbReference>
<dbReference type="GO" id="GO:0051775">
    <property type="term" value="P:response to redox state"/>
    <property type="evidence" value="ECO:0007669"/>
    <property type="project" value="InterPro"/>
</dbReference>
<dbReference type="Gene3D" id="3.40.50.720">
    <property type="entry name" value="NAD(P)-binding Rossmann-like Domain"/>
    <property type="match status" value="1"/>
</dbReference>
<dbReference type="Gene3D" id="1.10.10.10">
    <property type="entry name" value="Winged helix-like DNA-binding domain superfamily/Winged helix DNA-binding domain"/>
    <property type="match status" value="1"/>
</dbReference>
<dbReference type="HAMAP" id="MF_01131">
    <property type="entry name" value="Rex"/>
    <property type="match status" value="1"/>
</dbReference>
<dbReference type="InterPro" id="IPR003781">
    <property type="entry name" value="CoA-bd"/>
</dbReference>
<dbReference type="InterPro" id="IPR036291">
    <property type="entry name" value="NAD(P)-bd_dom_sf"/>
</dbReference>
<dbReference type="InterPro" id="IPR009718">
    <property type="entry name" value="Rex_DNA-bd_C_dom"/>
</dbReference>
<dbReference type="InterPro" id="IPR022876">
    <property type="entry name" value="Tscrpt_rep_Rex"/>
</dbReference>
<dbReference type="InterPro" id="IPR036388">
    <property type="entry name" value="WH-like_DNA-bd_sf"/>
</dbReference>
<dbReference type="InterPro" id="IPR036390">
    <property type="entry name" value="WH_DNA-bd_sf"/>
</dbReference>
<dbReference type="NCBIfam" id="NF003989">
    <property type="entry name" value="PRK05472.1-3"/>
    <property type="match status" value="1"/>
</dbReference>
<dbReference type="NCBIfam" id="NF003990">
    <property type="entry name" value="PRK05472.1-4"/>
    <property type="match status" value="1"/>
</dbReference>
<dbReference type="NCBIfam" id="NF003993">
    <property type="entry name" value="PRK05472.2-2"/>
    <property type="match status" value="1"/>
</dbReference>
<dbReference type="NCBIfam" id="NF003994">
    <property type="entry name" value="PRK05472.2-3"/>
    <property type="match status" value="1"/>
</dbReference>
<dbReference type="NCBIfam" id="NF003995">
    <property type="entry name" value="PRK05472.2-4"/>
    <property type="match status" value="1"/>
</dbReference>
<dbReference type="NCBIfam" id="NF003996">
    <property type="entry name" value="PRK05472.2-5"/>
    <property type="match status" value="1"/>
</dbReference>
<dbReference type="PANTHER" id="PTHR35786">
    <property type="entry name" value="REDOX-SENSING TRANSCRIPTIONAL REPRESSOR REX"/>
    <property type="match status" value="1"/>
</dbReference>
<dbReference type="PANTHER" id="PTHR35786:SF1">
    <property type="entry name" value="REDOX-SENSING TRANSCRIPTIONAL REPRESSOR REX 1"/>
    <property type="match status" value="1"/>
</dbReference>
<dbReference type="Pfam" id="PF02629">
    <property type="entry name" value="CoA_binding"/>
    <property type="match status" value="1"/>
</dbReference>
<dbReference type="Pfam" id="PF06971">
    <property type="entry name" value="Put_DNA-bind_N"/>
    <property type="match status" value="1"/>
</dbReference>
<dbReference type="SMART" id="SM00881">
    <property type="entry name" value="CoA_binding"/>
    <property type="match status" value="1"/>
</dbReference>
<dbReference type="SUPFAM" id="SSF51735">
    <property type="entry name" value="NAD(P)-binding Rossmann-fold domains"/>
    <property type="match status" value="1"/>
</dbReference>
<dbReference type="SUPFAM" id="SSF46785">
    <property type="entry name" value="Winged helix' DNA-binding domain"/>
    <property type="match status" value="1"/>
</dbReference>
<proteinExistence type="inferred from homology"/>
<organism>
    <name type="scientific">Caldicellulosiruptor saccharolyticus (strain ATCC 43494 / DSM 8903 / Tp8T 6331)</name>
    <dbReference type="NCBI Taxonomy" id="351627"/>
    <lineage>
        <taxon>Bacteria</taxon>
        <taxon>Bacillati</taxon>
        <taxon>Bacillota</taxon>
        <taxon>Bacillota incertae sedis</taxon>
        <taxon>Caldicellulosiruptorales</taxon>
        <taxon>Caldicellulosiruptoraceae</taxon>
        <taxon>Caldicellulosiruptor</taxon>
    </lineage>
</organism>
<protein>
    <recommendedName>
        <fullName evidence="1">Redox-sensing transcriptional repressor Rex</fullName>
    </recommendedName>
</protein>
<gene>
    <name evidence="1" type="primary">rex</name>
    <name type="ordered locus">Csac_1220</name>
</gene>
<evidence type="ECO:0000255" key="1">
    <source>
        <dbReference type="HAMAP-Rule" id="MF_01131"/>
    </source>
</evidence>
<comment type="function">
    <text evidence="1">Modulates transcription in response to changes in cellular NADH/NAD(+) redox state.</text>
</comment>
<comment type="subunit">
    <text evidence="1">Homodimer.</text>
</comment>
<comment type="subcellular location">
    <subcellularLocation>
        <location evidence="1">Cytoplasm</location>
    </subcellularLocation>
</comment>
<comment type="similarity">
    <text evidence="1">Belongs to the transcriptional regulatory Rex family.</text>
</comment>
<sequence length="219" mass="24896">MFKKKNVSLAVVRRLPRYLRYVEDLLNHDIMRISSSELSQRMGYTASQVRQDFNNFGGFGQQGYGYSTQVLYENLVKILGLDKNFKMIIVGVGNLGQALANYANFYKKGFRLVGLFDVDPQKVGKSIRNIKIQHIDELKDFIKKNDVDIGVLCVPSEVAQEVANLMVEGGIKGIWNFTAKEIEVKDDVVVENVHLIDSLMVLSYKLNEKLLEKQEASQK</sequence>
<keyword id="KW-0963">Cytoplasm</keyword>
<keyword id="KW-0238">DNA-binding</keyword>
<keyword id="KW-0520">NAD</keyword>
<keyword id="KW-0678">Repressor</keyword>
<keyword id="KW-0804">Transcription</keyword>
<keyword id="KW-0805">Transcription regulation</keyword>
<name>REX_CALS8</name>
<accession>A4XIT8</accession>
<feature type="chain" id="PRO_1000065392" description="Redox-sensing transcriptional repressor Rex">
    <location>
        <begin position="1"/>
        <end position="219"/>
    </location>
</feature>
<feature type="DNA-binding region" description="H-T-H motif" evidence="1">
    <location>
        <begin position="17"/>
        <end position="56"/>
    </location>
</feature>
<feature type="binding site" evidence="1">
    <location>
        <begin position="91"/>
        <end position="96"/>
    </location>
    <ligand>
        <name>NAD(+)</name>
        <dbReference type="ChEBI" id="CHEBI:57540"/>
    </ligand>
</feature>